<organism>
    <name type="scientific">Culex quinquefasciatus</name>
    <name type="common">Southern house mosquito</name>
    <name type="synonym">Culex pungens</name>
    <dbReference type="NCBI Taxonomy" id="7176"/>
    <lineage>
        <taxon>Eukaryota</taxon>
        <taxon>Metazoa</taxon>
        <taxon>Ecdysozoa</taxon>
        <taxon>Arthropoda</taxon>
        <taxon>Hexapoda</taxon>
        <taxon>Insecta</taxon>
        <taxon>Pterygota</taxon>
        <taxon>Neoptera</taxon>
        <taxon>Endopterygota</taxon>
        <taxon>Diptera</taxon>
        <taxon>Nematocera</taxon>
        <taxon>Culicoidea</taxon>
        <taxon>Culicidae</taxon>
        <taxon>Culicinae</taxon>
        <taxon>Culicini</taxon>
        <taxon>Culex</taxon>
        <taxon>Culex</taxon>
    </lineage>
</organism>
<dbReference type="EMBL" id="DS231859">
    <property type="protein sequence ID" value="EDS39064.1"/>
    <property type="molecule type" value="Genomic_DNA"/>
</dbReference>
<dbReference type="RefSeq" id="XP_001845048.1">
    <property type="nucleotide sequence ID" value="XM_001844996.1"/>
</dbReference>
<dbReference type="SMR" id="B0W8L4"/>
<dbReference type="FunCoup" id="B0W8L4">
    <property type="interactions" value="227"/>
</dbReference>
<dbReference type="STRING" id="7176.B0W8L4"/>
<dbReference type="EnsemblMetazoa" id="CPIJ003322-RA">
    <property type="protein sequence ID" value="CPIJ003322-PA"/>
    <property type="gene ID" value="CPIJ003322"/>
</dbReference>
<dbReference type="EnsemblMetazoa" id="CQUJHB017088.R26381">
    <property type="protein sequence ID" value="CQUJHB017088.P26381"/>
    <property type="gene ID" value="CQUJHB017088"/>
</dbReference>
<dbReference type="EnsemblMetazoa" id="XM_001844996.2">
    <property type="protein sequence ID" value="XP_001845048.2"/>
    <property type="gene ID" value="LOC6034775"/>
</dbReference>
<dbReference type="GeneID" id="6034775"/>
<dbReference type="KEGG" id="cqu:CpipJ_CPIJ003322"/>
<dbReference type="CTD" id="40035"/>
<dbReference type="VEuPathDB" id="VectorBase:CPIJ003322"/>
<dbReference type="VEuPathDB" id="VectorBase:CQUJHB017088"/>
<dbReference type="eggNOG" id="KOG2612">
    <property type="taxonomic scope" value="Eukaryota"/>
</dbReference>
<dbReference type="HOGENOM" id="CLU_100743_0_0_1"/>
<dbReference type="InParanoid" id="B0W8L4"/>
<dbReference type="OMA" id="RMCEMPN"/>
<dbReference type="OrthoDB" id="21557at2759"/>
<dbReference type="PhylomeDB" id="B0W8L4"/>
<dbReference type="Proteomes" id="UP000002320">
    <property type="component" value="Unassembled WGS sequence"/>
</dbReference>
<dbReference type="GO" id="GO:0071819">
    <property type="term" value="C:DUBm complex"/>
    <property type="evidence" value="ECO:0007669"/>
    <property type="project" value="UniProtKB-UniRule"/>
</dbReference>
<dbReference type="GO" id="GO:0000124">
    <property type="term" value="C:SAGA complex"/>
    <property type="evidence" value="ECO:0007669"/>
    <property type="project" value="UniProtKB-UniRule"/>
</dbReference>
<dbReference type="GO" id="GO:0003713">
    <property type="term" value="F:transcription coactivator activity"/>
    <property type="evidence" value="ECO:0007669"/>
    <property type="project" value="UniProtKB-UniRule"/>
</dbReference>
<dbReference type="GO" id="GO:0008270">
    <property type="term" value="F:zinc ion binding"/>
    <property type="evidence" value="ECO:0007669"/>
    <property type="project" value="UniProtKB-UniRule"/>
</dbReference>
<dbReference type="GO" id="GO:0006325">
    <property type="term" value="P:chromatin organization"/>
    <property type="evidence" value="ECO:0007669"/>
    <property type="project" value="UniProtKB-KW"/>
</dbReference>
<dbReference type="GO" id="GO:0006357">
    <property type="term" value="P:regulation of transcription by RNA polymerase II"/>
    <property type="evidence" value="ECO:0007669"/>
    <property type="project" value="TreeGrafter"/>
</dbReference>
<dbReference type="FunFam" id="3.30.160.60:FF:000118">
    <property type="entry name" value="Ataxin-7-like protein 3"/>
    <property type="match status" value="1"/>
</dbReference>
<dbReference type="Gene3D" id="3.30.160.60">
    <property type="entry name" value="Classic Zinc Finger"/>
    <property type="match status" value="1"/>
</dbReference>
<dbReference type="HAMAP" id="MF_03047">
    <property type="entry name" value="Sgf11"/>
    <property type="match status" value="1"/>
</dbReference>
<dbReference type="InterPro" id="IPR013246">
    <property type="entry name" value="SAGA_su_Sgf11"/>
</dbReference>
<dbReference type="InterPro" id="IPR051078">
    <property type="entry name" value="SGF11"/>
</dbReference>
<dbReference type="PANTHER" id="PTHR46367">
    <property type="entry name" value="ATAXIN-7-LIKE PROTEIN 3"/>
    <property type="match status" value="1"/>
</dbReference>
<dbReference type="PANTHER" id="PTHR46367:SF1">
    <property type="entry name" value="ATAXIN-7-LIKE PROTEIN 3"/>
    <property type="match status" value="1"/>
</dbReference>
<dbReference type="Pfam" id="PF08209">
    <property type="entry name" value="Sgf11"/>
    <property type="match status" value="1"/>
</dbReference>
<gene>
    <name evidence="2" type="primary">Sgf11</name>
    <name type="ORF">CPIJ003322</name>
</gene>
<sequence length="183" mass="20451">MSESEPVHIEYADETELLTEFRNFMSDPDTREKAANYLLNSLIDESILGIVFEVHHAYKTGSVAAIEGQPEDPKSFTIVDMPDMDVFGSTNSKKAIDCSCPNCNRIVAASRFAPHLEKCMGMGRNSSRIASRRIANTRDGGNYFGADEDDEDDADWSGEKRKKKIAPVRTNGSKKNVMKIYFL</sequence>
<keyword id="KW-0010">Activator</keyword>
<keyword id="KW-0156">Chromatin regulator</keyword>
<keyword id="KW-0479">Metal-binding</keyword>
<keyword id="KW-0539">Nucleus</keyword>
<keyword id="KW-1185">Reference proteome</keyword>
<keyword id="KW-0804">Transcription</keyword>
<keyword id="KW-0805">Transcription regulation</keyword>
<keyword id="KW-0862">Zinc</keyword>
<keyword id="KW-0863">Zinc-finger</keyword>
<comment type="function">
    <text evidence="2">Component of the transcription regulatory histone acetylation (HAT) complex SAGA, a multiprotein complex that activates transcription by remodeling chromatin and mediating histone acetylation and deubiquitination. Within the SAGA complex, participates in a subcomplex that specifically deubiquitinates histone H2B. The SAGA complex is recruited to specific gene promoters by activators, where it is required for transcription.</text>
</comment>
<comment type="subunit">
    <text evidence="1">Component of some SAGA transcription coactivator-HAT complexes. Within the SAGA complex, participates in a subcomplex of SAGA called the DUB module (deubiquitination module) (By similarity).</text>
</comment>
<comment type="subcellular location">
    <subcellularLocation>
        <location evidence="2">Nucleus</location>
    </subcellularLocation>
</comment>
<comment type="domain">
    <text evidence="2">The long N-terminal helix forms part of the 'assembly lobe' of the SAGA deubiquitination module.</text>
</comment>
<comment type="domain">
    <text evidence="2">The C-terminal SGF11-type zinc-finger domain forms part of the 'catalytic lobe' of the SAGA deubiquitination module.</text>
</comment>
<comment type="similarity">
    <text evidence="2">Belongs to the SGF11 family.</text>
</comment>
<evidence type="ECO:0000250" key="1"/>
<evidence type="ECO:0000255" key="2">
    <source>
        <dbReference type="HAMAP-Rule" id="MF_03047"/>
    </source>
</evidence>
<evidence type="ECO:0000256" key="3">
    <source>
        <dbReference type="SAM" id="MobiDB-lite"/>
    </source>
</evidence>
<name>SGF11_CULQU</name>
<feature type="chain" id="PRO_0000367520" description="SAGA-associated factor 11 homolog">
    <location>
        <begin position="1"/>
        <end position="183"/>
    </location>
</feature>
<feature type="zinc finger region" description="SGF11-type" evidence="2">
    <location>
        <begin position="98"/>
        <end position="119"/>
    </location>
</feature>
<feature type="region of interest" description="Disordered" evidence="3">
    <location>
        <begin position="140"/>
        <end position="167"/>
    </location>
</feature>
<feature type="compositionally biased region" description="Acidic residues" evidence="3">
    <location>
        <begin position="146"/>
        <end position="156"/>
    </location>
</feature>
<accession>B0W8L4</accession>
<reference key="1">
    <citation type="submission" date="2007-03" db="EMBL/GenBank/DDBJ databases">
        <title>Annotation of Culex pipiens quinquefasciatus.</title>
        <authorList>
            <consortium name="The Broad Institute Genome Sequencing Platform"/>
            <person name="Atkinson P.W."/>
            <person name="Hemingway J."/>
            <person name="Christensen B.M."/>
            <person name="Higgs S."/>
            <person name="Kodira C.D."/>
            <person name="Hannick L.I."/>
            <person name="Megy K."/>
            <person name="O'Leary S.B."/>
            <person name="Pearson M."/>
            <person name="Haas B.J."/>
            <person name="Mauceli E."/>
            <person name="Wortman J.R."/>
            <person name="Lee N.H."/>
            <person name="Guigo R."/>
            <person name="Stanke M."/>
            <person name="Alvarado L."/>
            <person name="Amedeo P."/>
            <person name="Antoine C.H."/>
            <person name="Arensburger P."/>
            <person name="Bidwell S.L."/>
            <person name="Crawford M."/>
            <person name="Camaro F."/>
            <person name="Devon K."/>
            <person name="Engels R."/>
            <person name="Hammond M."/>
            <person name="Howarth C."/>
            <person name="Koehrsen M."/>
            <person name="Lawson D."/>
            <person name="Montgomery P."/>
            <person name="Nene V."/>
            <person name="Nusbaum C."/>
            <person name="Puiu D."/>
            <person name="Romero-Severson J."/>
            <person name="Severson D.W."/>
            <person name="Shumway M."/>
            <person name="Sisk P."/>
            <person name="Stolte C."/>
            <person name="Zeng Q."/>
            <person name="Eisenstadt E."/>
            <person name="Fraser-Liggett C.M."/>
            <person name="Strausberg R."/>
            <person name="Galagan J."/>
            <person name="Birren B."/>
            <person name="Collins F.H."/>
        </authorList>
    </citation>
    <scope>NUCLEOTIDE SEQUENCE [LARGE SCALE GENOMIC DNA]</scope>
    <source>
        <strain>JHB</strain>
    </source>
</reference>
<proteinExistence type="inferred from homology"/>
<protein>
    <recommendedName>
        <fullName evidence="2">SAGA-associated factor 11 homolog</fullName>
    </recommendedName>
</protein>